<keyword id="KW-0349">Heme</keyword>
<keyword id="KW-0408">Iron</keyword>
<keyword id="KW-0479">Metal-binding</keyword>
<keyword id="KW-0503">Monooxygenase</keyword>
<keyword id="KW-0560">Oxidoreductase</keyword>
<keyword id="KW-1185">Reference proteome</keyword>
<feature type="chain" id="PRO_0000437596" description="Cytochrome P450 monooxygenase asqL">
    <location>
        <begin position="1"/>
        <end position="478"/>
    </location>
</feature>
<feature type="binding site" description="axial binding residue" evidence="1">
    <location>
        <position position="407"/>
    </location>
    <ligand>
        <name>heme</name>
        <dbReference type="ChEBI" id="CHEBI:30413"/>
    </ligand>
    <ligandPart>
        <name>Fe</name>
        <dbReference type="ChEBI" id="CHEBI:18248"/>
    </ligandPart>
</feature>
<reference key="1">
    <citation type="journal article" date="2005" name="Nature">
        <title>Sequencing of Aspergillus nidulans and comparative analysis with A. fumigatus and A. oryzae.</title>
        <authorList>
            <person name="Galagan J.E."/>
            <person name="Calvo S.E."/>
            <person name="Cuomo C."/>
            <person name="Ma L.-J."/>
            <person name="Wortman J.R."/>
            <person name="Batzoglou S."/>
            <person name="Lee S.-I."/>
            <person name="Bastuerkmen M."/>
            <person name="Spevak C.C."/>
            <person name="Clutterbuck J."/>
            <person name="Kapitonov V."/>
            <person name="Jurka J."/>
            <person name="Scazzocchio C."/>
            <person name="Farman M.L."/>
            <person name="Butler J."/>
            <person name="Purcell S."/>
            <person name="Harris S."/>
            <person name="Braus G.H."/>
            <person name="Draht O."/>
            <person name="Busch S."/>
            <person name="D'Enfert C."/>
            <person name="Bouchier C."/>
            <person name="Goldman G.H."/>
            <person name="Bell-Pedersen D."/>
            <person name="Griffiths-Jones S."/>
            <person name="Doonan J.H."/>
            <person name="Yu J."/>
            <person name="Vienken K."/>
            <person name="Pain A."/>
            <person name="Freitag M."/>
            <person name="Selker E.U."/>
            <person name="Archer D.B."/>
            <person name="Penalva M.A."/>
            <person name="Oakley B.R."/>
            <person name="Momany M."/>
            <person name="Tanaka T."/>
            <person name="Kumagai T."/>
            <person name="Asai K."/>
            <person name="Machida M."/>
            <person name="Nierman W.C."/>
            <person name="Denning D.W."/>
            <person name="Caddick M.X."/>
            <person name="Hynes M."/>
            <person name="Paoletti M."/>
            <person name="Fischer R."/>
            <person name="Miller B.L."/>
            <person name="Dyer P.S."/>
            <person name="Sachs M.S."/>
            <person name="Osmani S.A."/>
            <person name="Birren B.W."/>
        </authorList>
    </citation>
    <scope>NUCLEOTIDE SEQUENCE [LARGE SCALE GENOMIC DNA]</scope>
    <source>
        <strain>FGSC A4 / ATCC 38163 / CBS 112.46 / NRRL 194 / M139</strain>
    </source>
</reference>
<reference key="2">
    <citation type="journal article" date="2009" name="Fungal Genet. Biol.">
        <title>The 2008 update of the Aspergillus nidulans genome annotation: a community effort.</title>
        <authorList>
            <person name="Wortman J.R."/>
            <person name="Gilsenan J.M."/>
            <person name="Joardar V."/>
            <person name="Deegan J."/>
            <person name="Clutterbuck J."/>
            <person name="Andersen M.R."/>
            <person name="Archer D."/>
            <person name="Bencina M."/>
            <person name="Braus G."/>
            <person name="Coutinho P."/>
            <person name="von Dohren H."/>
            <person name="Doonan J."/>
            <person name="Driessen A.J."/>
            <person name="Durek P."/>
            <person name="Espeso E."/>
            <person name="Fekete E."/>
            <person name="Flipphi M."/>
            <person name="Estrada C.G."/>
            <person name="Geysens S."/>
            <person name="Goldman G."/>
            <person name="de Groot P.W."/>
            <person name="Hansen K."/>
            <person name="Harris S.D."/>
            <person name="Heinekamp T."/>
            <person name="Helmstaedt K."/>
            <person name="Henrissat B."/>
            <person name="Hofmann G."/>
            <person name="Homan T."/>
            <person name="Horio T."/>
            <person name="Horiuchi H."/>
            <person name="James S."/>
            <person name="Jones M."/>
            <person name="Karaffa L."/>
            <person name="Karanyi Z."/>
            <person name="Kato M."/>
            <person name="Keller N."/>
            <person name="Kelly D.E."/>
            <person name="Kiel J.A."/>
            <person name="Kim J.M."/>
            <person name="van der Klei I.J."/>
            <person name="Klis F.M."/>
            <person name="Kovalchuk A."/>
            <person name="Krasevec N."/>
            <person name="Kubicek C.P."/>
            <person name="Liu B."/>
            <person name="Maccabe A."/>
            <person name="Meyer V."/>
            <person name="Mirabito P."/>
            <person name="Miskei M."/>
            <person name="Mos M."/>
            <person name="Mullins J."/>
            <person name="Nelson D.R."/>
            <person name="Nielsen J."/>
            <person name="Oakley B.R."/>
            <person name="Osmani S.A."/>
            <person name="Pakula T."/>
            <person name="Paszewski A."/>
            <person name="Paulsen I."/>
            <person name="Pilsyk S."/>
            <person name="Pocsi I."/>
            <person name="Punt P.J."/>
            <person name="Ram A.F."/>
            <person name="Ren Q."/>
            <person name="Robellet X."/>
            <person name="Robson G."/>
            <person name="Seiboth B."/>
            <person name="van Solingen P."/>
            <person name="Specht T."/>
            <person name="Sun J."/>
            <person name="Taheri-Talesh N."/>
            <person name="Takeshita N."/>
            <person name="Ussery D."/>
            <person name="vanKuyk P.A."/>
            <person name="Visser H."/>
            <person name="van de Vondervoort P.J."/>
            <person name="de Vries R.P."/>
            <person name="Walton J."/>
            <person name="Xiang X."/>
            <person name="Xiong Y."/>
            <person name="Zeng A.P."/>
            <person name="Brandt B.W."/>
            <person name="Cornell M.J."/>
            <person name="van den Hondel C.A."/>
            <person name="Visser J."/>
            <person name="Oliver S.G."/>
            <person name="Turner G."/>
        </authorList>
    </citation>
    <scope>GENOME REANNOTATION</scope>
    <source>
        <strain>FGSC A4 / ATCC 38163 / CBS 112.46 / NRRL 194 / M139</strain>
    </source>
</reference>
<reference key="3">
    <citation type="journal article" date="2014" name="Angew. Chem. Int. Ed.">
        <title>Non-heme dioxygenase catalyzes atypical oxidations of 6,7-bicyclic systems to form the 6,6-quinolone core of viridicatin-type fungal alkaloids.</title>
        <authorList>
            <person name="Ishikawa N."/>
            <person name="Tanaka H."/>
            <person name="Koyama F."/>
            <person name="Noguchi H."/>
            <person name="Wang C.C."/>
            <person name="Hotta K."/>
            <person name="Watanabe K."/>
        </authorList>
    </citation>
    <scope>FUNCTION</scope>
    <scope>PATHWAY</scope>
</reference>
<protein>
    <recommendedName>
        <fullName evidence="3">Cytochrome P450 monooxygenase asqL</fullName>
        <ecNumber evidence="5">1.-.-.-</ecNumber>
    </recommendedName>
    <alternativeName>
        <fullName evidence="4">4'-methoxyviridicatin/aspoquinolone biosynthesis cluster protein asqL</fullName>
    </alternativeName>
    <alternativeName>
        <fullName evidence="3">Aspoquinolone biosynthesis protein L</fullName>
    </alternativeName>
</protein>
<name>ASQL_EMENI</name>
<comment type="function">
    <text evidence="2 4">Cytochrome P450 monooxygenase; part of the gene cluster that mediates the biosynthesis of the aspoquinolone mycotoxins (PubMed:25251934). The role of asqL within the aspoquinolone pathway has still to be determined (Probable). The first step of the pathway is catalyzed by the nonribosomal peptide synthetase asqK that condenses anthranilic acid and O-methyl-L-tyrosine to produce 4'-methoxycyclopeptin. 4'-methoxycyclopeptin is then converted to 4'-methoxydehydrocyclopeptin by the ketoglutarate-dependent dioxygenase asqJ. AsqJ also converts its first product 4'-methoxydehydrocyclopeptin to 4'-methoxycyclopenin. The following conversion of 4'-methoxycyclopenin into 4'-methoxyviridicatin is catalyzed by the cyclopenase asqI. 4'-methoxyviridicatin is the precursor of quinolone natural products, and is further converted to quinolinone B. The prenyltransferase asqH1 then catalyzes the canonical Friedel-Crafts alkylation of quinolinone B with dimethylallyl cation to yield dimethylallyl quinolone, which is subjected to FAD-dependent dehydrogenation by the FAD-linked oxidoreductase asqF to yield conjugated aryl diene. The delta(3') double bond then serves as the site of the second alkylation with DMAPP catalyzed by the prenyltransferase asqH2 to yield a carbenium ion intermediate, which can be attacked by H(2)O to yield a styrenyl quinolone containing a C3'-hydroxyprenyl chain. The FAD-dependent monooxygenase asqG performs epoxidation of the terminal C7'-C8' olefin. Finally, after dehydratation of the epoxide at C3 by asqC, the quinolone epoxide rearrangement protein asqO catalyzes an enzymatic 3-exo-tet cyclization to yield the cyclopropyl-THF ring system in aspoquinolone (Probable).</text>
</comment>
<comment type="cofactor">
    <cofactor evidence="1">
        <name>heme</name>
        <dbReference type="ChEBI" id="CHEBI:30413"/>
    </cofactor>
</comment>
<comment type="pathway">
    <text evidence="5">Secondary metabolite biosynthesis.</text>
</comment>
<comment type="pathway">
    <text evidence="5">Alkaloid biosynthesis.</text>
</comment>
<comment type="pathway">
    <text evidence="5">Mycotoxin biosynthesis.</text>
</comment>
<comment type="similarity">
    <text evidence="4">Belongs to the cytochrome P450 family.</text>
</comment>
<dbReference type="EC" id="1.-.-.-" evidence="5"/>
<dbReference type="EMBL" id="BN001306">
    <property type="protein sequence ID" value="CBF82284.1"/>
    <property type="molecule type" value="Genomic_DNA"/>
</dbReference>
<dbReference type="EMBL" id="AACD01000170">
    <property type="protein sequence ID" value="EAA61516.1"/>
    <property type="molecule type" value="Genomic_DNA"/>
</dbReference>
<dbReference type="RefSeq" id="XP_682494.1">
    <property type="nucleotide sequence ID" value="XM_677402.1"/>
</dbReference>
<dbReference type="SMR" id="Q5AR55"/>
<dbReference type="STRING" id="227321.Q5AR55"/>
<dbReference type="EnsemblFungi" id="CBF82284">
    <property type="protein sequence ID" value="CBF82284"/>
    <property type="gene ID" value="ANIA_09225"/>
</dbReference>
<dbReference type="KEGG" id="ani:ANIA_09225"/>
<dbReference type="eggNOG" id="KOG0156">
    <property type="taxonomic scope" value="Eukaryota"/>
</dbReference>
<dbReference type="HOGENOM" id="CLU_001570_14_4_1"/>
<dbReference type="InParanoid" id="Q5AR55"/>
<dbReference type="OMA" id="FCFAGTD"/>
<dbReference type="OrthoDB" id="3945418at2759"/>
<dbReference type="Proteomes" id="UP000000560">
    <property type="component" value="Chromosome VI"/>
</dbReference>
<dbReference type="GO" id="GO:0020037">
    <property type="term" value="F:heme binding"/>
    <property type="evidence" value="ECO:0007669"/>
    <property type="project" value="InterPro"/>
</dbReference>
<dbReference type="GO" id="GO:0005506">
    <property type="term" value="F:iron ion binding"/>
    <property type="evidence" value="ECO:0007669"/>
    <property type="project" value="InterPro"/>
</dbReference>
<dbReference type="GO" id="GO:0004497">
    <property type="term" value="F:monooxygenase activity"/>
    <property type="evidence" value="ECO:0007669"/>
    <property type="project" value="UniProtKB-KW"/>
</dbReference>
<dbReference type="GO" id="GO:0016705">
    <property type="term" value="F:oxidoreductase activity, acting on paired donors, with incorporation or reduction of molecular oxygen"/>
    <property type="evidence" value="ECO:0007669"/>
    <property type="project" value="InterPro"/>
</dbReference>
<dbReference type="GO" id="GO:0044550">
    <property type="term" value="P:secondary metabolite biosynthetic process"/>
    <property type="evidence" value="ECO:0007669"/>
    <property type="project" value="UniProtKB-ARBA"/>
</dbReference>
<dbReference type="CDD" id="cd11062">
    <property type="entry name" value="CYP58-like"/>
    <property type="match status" value="1"/>
</dbReference>
<dbReference type="FunFam" id="1.10.630.10:FF:000291">
    <property type="entry name" value="Cytochrome P450 monooxygenase asqL"/>
    <property type="match status" value="1"/>
</dbReference>
<dbReference type="Gene3D" id="1.10.630.10">
    <property type="entry name" value="Cytochrome P450"/>
    <property type="match status" value="1"/>
</dbReference>
<dbReference type="InterPro" id="IPR001128">
    <property type="entry name" value="Cyt_P450"/>
</dbReference>
<dbReference type="InterPro" id="IPR017972">
    <property type="entry name" value="Cyt_P450_CS"/>
</dbReference>
<dbReference type="InterPro" id="IPR002401">
    <property type="entry name" value="Cyt_P450_E_grp-I"/>
</dbReference>
<dbReference type="InterPro" id="IPR036396">
    <property type="entry name" value="Cyt_P450_sf"/>
</dbReference>
<dbReference type="InterPro" id="IPR050121">
    <property type="entry name" value="Cytochrome_P450_monoxygenase"/>
</dbReference>
<dbReference type="PANTHER" id="PTHR24305">
    <property type="entry name" value="CYTOCHROME P450"/>
    <property type="match status" value="1"/>
</dbReference>
<dbReference type="PANTHER" id="PTHR24305:SF210">
    <property type="entry name" value="CYTOCHROME P450 MONOOXYGENASE ASQL-RELATED"/>
    <property type="match status" value="1"/>
</dbReference>
<dbReference type="Pfam" id="PF00067">
    <property type="entry name" value="p450"/>
    <property type="match status" value="1"/>
</dbReference>
<dbReference type="PRINTS" id="PR00463">
    <property type="entry name" value="EP450I"/>
</dbReference>
<dbReference type="PRINTS" id="PR00385">
    <property type="entry name" value="P450"/>
</dbReference>
<dbReference type="SUPFAM" id="SSF48264">
    <property type="entry name" value="Cytochrome P450"/>
    <property type="match status" value="1"/>
</dbReference>
<dbReference type="PROSITE" id="PS00086">
    <property type="entry name" value="CYTOCHROME_P450"/>
    <property type="match status" value="1"/>
</dbReference>
<sequence>MSNGAPFPLDYRGTRNYGPRFIPDRYSTFVSSARKSPRTPPGGSDQVVHVNDAGVYKRTFAVASPFPKSEFFYSSVGVGDAIGAMTDTKKHRVRRSILGPRLRAKAIAPYTPSLQKLVIACMDIMAGKARQGKVINLLRYTRALTVDVISDFTFGRPMGVVNEAEEMPDLLNDLEVFGRHFHILKHFPISRKLLDIIPESFARKLMPLPGFFELREKATTAVNEAVVERQAGKTISNNTDGASFLDLLLNQIDENPSVLVDEGCAFITGGSDTTGFTMENATYLILSHPHILQSLLQELDTSPHIRDTFDLDHILRLPFLTAIIKETLRLYTPAPSPLPRTVPAEGIDVHGHFLPGGTILTHSLYLIHHNPVLFADPKSFKPERWLGTQGKVLEQYYVPFSKGSRSCIGMALAYHEVYTYLSLLFSRFEMEIFETSQSDMDWREHFFVKRNGQLRIRIVRDRWTGEAFPTRAVEADLR</sequence>
<organism>
    <name type="scientific">Emericella nidulans (strain FGSC A4 / ATCC 38163 / CBS 112.46 / NRRL 194 / M139)</name>
    <name type="common">Aspergillus nidulans</name>
    <dbReference type="NCBI Taxonomy" id="227321"/>
    <lineage>
        <taxon>Eukaryota</taxon>
        <taxon>Fungi</taxon>
        <taxon>Dikarya</taxon>
        <taxon>Ascomycota</taxon>
        <taxon>Pezizomycotina</taxon>
        <taxon>Eurotiomycetes</taxon>
        <taxon>Eurotiomycetidae</taxon>
        <taxon>Eurotiales</taxon>
        <taxon>Aspergillaceae</taxon>
        <taxon>Aspergillus</taxon>
        <taxon>Aspergillus subgen. Nidulantes</taxon>
    </lineage>
</organism>
<proteinExistence type="inferred from homology"/>
<gene>
    <name evidence="3" type="primary">asqL</name>
    <name type="ORF">AN9225</name>
</gene>
<accession>Q5AR55</accession>
<accession>C8VJQ6</accession>
<evidence type="ECO:0000250" key="1">
    <source>
        <dbReference type="UniProtKB" id="P04798"/>
    </source>
</evidence>
<evidence type="ECO:0000269" key="2">
    <source>
    </source>
</evidence>
<evidence type="ECO:0000303" key="3">
    <source>
    </source>
</evidence>
<evidence type="ECO:0000305" key="4"/>
<evidence type="ECO:0000305" key="5">
    <source>
    </source>
</evidence>